<name>TSSK1_PSEAE</name>
<feature type="chain" id="PRO_0000449266" description="Type VI secretion system baseplate component TssK1">
    <location>
        <begin position="1"/>
        <end position="444"/>
    </location>
</feature>
<dbReference type="EMBL" id="AE004091">
    <property type="protein sequence ID" value="AAG03469.1"/>
    <property type="molecule type" value="Genomic_DNA"/>
</dbReference>
<dbReference type="PIR" id="D83634">
    <property type="entry name" value="D83634"/>
</dbReference>
<dbReference type="RefSeq" id="NP_248769.1">
    <property type="nucleotide sequence ID" value="NC_002516.2"/>
</dbReference>
<dbReference type="SMR" id="Q9I753"/>
<dbReference type="STRING" id="208964.PA0079"/>
<dbReference type="PaxDb" id="208964-PA0079"/>
<dbReference type="GeneID" id="879382"/>
<dbReference type="KEGG" id="pae:PA0079"/>
<dbReference type="PATRIC" id="fig|208964.12.peg.82"/>
<dbReference type="PseudoCAP" id="PA0079"/>
<dbReference type="HOGENOM" id="CLU_031690_3_0_6"/>
<dbReference type="InParanoid" id="Q9I753"/>
<dbReference type="OrthoDB" id="9775333at2"/>
<dbReference type="PhylomeDB" id="Q9I753"/>
<dbReference type="BioCyc" id="PAER208964:G1FZ6-81-MONOMER"/>
<dbReference type="Proteomes" id="UP000002438">
    <property type="component" value="Chromosome"/>
</dbReference>
<dbReference type="InterPro" id="IPR010263">
    <property type="entry name" value="T6SS_TssK"/>
</dbReference>
<dbReference type="NCBIfam" id="TIGR03353">
    <property type="entry name" value="VI_chp_4"/>
    <property type="match status" value="1"/>
</dbReference>
<dbReference type="PANTHER" id="PTHR35566">
    <property type="entry name" value="BLR3599 PROTEIN"/>
    <property type="match status" value="1"/>
</dbReference>
<dbReference type="PANTHER" id="PTHR35566:SF1">
    <property type="entry name" value="TYPE VI SECRETION SYSTEM BASEPLATE COMPONENT TSSK1"/>
    <property type="match status" value="1"/>
</dbReference>
<dbReference type="Pfam" id="PF05936">
    <property type="entry name" value="T6SS_VasE"/>
    <property type="match status" value="1"/>
</dbReference>
<protein>
    <recommendedName>
        <fullName evidence="3">Type VI secretion system baseplate component TssK1</fullName>
    </recommendedName>
</protein>
<reference key="1">
    <citation type="journal article" date="2000" name="Nature">
        <title>Complete genome sequence of Pseudomonas aeruginosa PAO1, an opportunistic pathogen.</title>
        <authorList>
            <person name="Stover C.K."/>
            <person name="Pham X.-Q.T."/>
            <person name="Erwin A.L."/>
            <person name="Mizoguchi S.D."/>
            <person name="Warrener P."/>
            <person name="Hickey M.J."/>
            <person name="Brinkman F.S.L."/>
            <person name="Hufnagle W.O."/>
            <person name="Kowalik D.J."/>
            <person name="Lagrou M."/>
            <person name="Garber R.L."/>
            <person name="Goltry L."/>
            <person name="Tolentino E."/>
            <person name="Westbrock-Wadman S."/>
            <person name="Yuan Y."/>
            <person name="Brody L.L."/>
            <person name="Coulter S.N."/>
            <person name="Folger K.R."/>
            <person name="Kas A."/>
            <person name="Larbig K."/>
            <person name="Lim R.M."/>
            <person name="Smith K.A."/>
            <person name="Spencer D.H."/>
            <person name="Wong G.K.-S."/>
            <person name="Wu Z."/>
            <person name="Paulsen I.T."/>
            <person name="Reizer J."/>
            <person name="Saier M.H. Jr."/>
            <person name="Hancock R.E.W."/>
            <person name="Lory S."/>
            <person name="Olson M.V."/>
        </authorList>
    </citation>
    <scope>NUCLEOTIDE SEQUENCE [LARGE SCALE GENOMIC DNA]</scope>
    <source>
        <strain>ATCC 15692 / DSM 22644 / CIP 104116 / JCM 14847 / LMG 12228 / 1C / PRS 101 / PAO1</strain>
    </source>
</reference>
<reference key="2">
    <citation type="journal article" date="2016" name="EMBO J.">
        <title>TssA forms a gp6-like ring attached to the type VI secretion sheath.</title>
        <authorList>
            <person name="Planamente S."/>
            <person name="Salih O."/>
            <person name="Manoli E."/>
            <person name="Albesa-Jove D."/>
            <person name="Freemont P.S."/>
            <person name="Filloux A."/>
        </authorList>
    </citation>
    <scope>INTERACTION WITH TSSA1</scope>
</reference>
<reference key="3">
    <citation type="journal article" date="2019" name="Front. Microbiol.">
        <title>Baseplate component TssK and spatio-temporal assembly of T6SS in Pseudomonas aeruginosa.</title>
        <authorList>
            <person name="Liebl D."/>
            <person name="Robert-Genthon M."/>
            <person name="Job V."/>
            <person name="Cogoni V."/>
            <person name="Attree I."/>
        </authorList>
    </citation>
    <scope>FUNCTION</scope>
    <scope>DISRUPTION PHENOTYPE</scope>
    <scope>SUBUNIT</scope>
</reference>
<comment type="function">
    <text evidence="2">Core component of the H1 type VI (H1-T6SS) secretion system that plays a role in the release of toxins targeting both eukaryotic and prokaryotic species. Functions as a spatio-temporal marker for assembly of contractile apparatus made of TssB1 and TssC1. This role in assembly depends on TssM1.</text>
</comment>
<comment type="subunit">
    <text evidence="1 2">Forms transient higher-order structures that correlated with dynamics of sheath component TssB1 (PubMed:31379775). Interacts with TssA1 (PubMed:27288401).</text>
</comment>
<comment type="disruption phenotype">
    <text evidence="2">Deletion mutant shows a severely reduced secretion of VgrG1a, VgrG1c as well as Hcp1.</text>
</comment>
<accession>Q9I753</accession>
<sequence length="444" mass="48275">MSWNNRVVWSEGMFLRPQHFQQHDRYLETLVDGRCRSLLAGGWGFSELKLDDALLTQGKLAIVSARGVLPDGTPFNIPADDPAPAPLNVEESLRDGIVYLGLPLKRVGTRDTVEEGEALGGARYVSQVQEVRDDNAAFESRAPVALGSQAFRLLTERDGLGEYAAVGVARVREKRADQALSLDEDYLPPVLDIAAAPPLASFAKELLGLLHQRGEALAGRVVASSAGGASEIADFLLLQLVNRAEALTGHLSRVRPLHPQELYRELVALAGEFCTFTASQRRPEEYPVYNHDDLAASFAPVMLALRQALATVIDAKAIAIPIVEKAYGVHVAMLSDRSLIDNASFVLVVRADVPGESLRGHFPQQAKVGSVEHIRDLVNLQLPGIGLLPMPVAPRQIPYHAGSTYFELDRGSAHWKQLTHSGGFAFHIAGQFPGLNLAFWAIRG</sequence>
<evidence type="ECO:0000269" key="1">
    <source>
    </source>
</evidence>
<evidence type="ECO:0000269" key="2">
    <source>
    </source>
</evidence>
<evidence type="ECO:0000303" key="3">
    <source>
    </source>
</evidence>
<gene>
    <name evidence="3" type="primary">tssK1</name>
    <name type="ordered locus">PA0079</name>
</gene>
<proteinExistence type="evidence at protein level"/>
<keyword id="KW-1185">Reference proteome</keyword>
<organism>
    <name type="scientific">Pseudomonas aeruginosa (strain ATCC 15692 / DSM 22644 / CIP 104116 / JCM 14847 / LMG 12228 / 1C / PRS 101 / PAO1)</name>
    <dbReference type="NCBI Taxonomy" id="208964"/>
    <lineage>
        <taxon>Bacteria</taxon>
        <taxon>Pseudomonadati</taxon>
        <taxon>Pseudomonadota</taxon>
        <taxon>Gammaproteobacteria</taxon>
        <taxon>Pseudomonadales</taxon>
        <taxon>Pseudomonadaceae</taxon>
        <taxon>Pseudomonas</taxon>
    </lineage>
</organism>